<accession>Q46XP0</accession>
<name>Y2732_CUPPJ</name>
<keyword id="KW-0378">Hydrolase</keyword>
<keyword id="KW-0479">Metal-binding</keyword>
<keyword id="KW-0482">Metalloprotease</keyword>
<keyword id="KW-0645">Protease</keyword>
<keyword id="KW-0862">Zinc</keyword>
<proteinExistence type="inferred from homology"/>
<sequence length="228" mass="24909">MSITNWPACERPREKLQECGAAALSDAELLAVFLRVGATGKSAVELARDLMVRFGSLTRLFTADARAVLGIRGMGEAKYTQLQAVPELARRMLAESLELPSGLDSPAAVRSYLRLTLAPLAQEVFVCLFLDTRNRMIASEELFRGTLNQTAVYPREVARRALAHNAASVIVAHNHPSGCCTPSQSDLQMTRMLARALDLIDVRLLDHFVVAGTHVHSFAEHGELKTAT</sequence>
<reference key="1">
    <citation type="journal article" date="2010" name="PLoS ONE">
        <title>The complete multipartite genome sequence of Cupriavidus necator JMP134, a versatile pollutant degrader.</title>
        <authorList>
            <person name="Lykidis A."/>
            <person name="Perez-Pantoja D."/>
            <person name="Ledger T."/>
            <person name="Mavromatis K."/>
            <person name="Anderson I.J."/>
            <person name="Ivanova N.N."/>
            <person name="Hooper S.D."/>
            <person name="Lapidus A."/>
            <person name="Lucas S."/>
            <person name="Gonzalez B."/>
            <person name="Kyrpides N.C."/>
        </authorList>
    </citation>
    <scope>NUCLEOTIDE SEQUENCE [LARGE SCALE GENOMIC DNA]</scope>
    <source>
        <strain>JMP134 / LMG 1197</strain>
    </source>
</reference>
<gene>
    <name type="ordered locus">Reut_A2732</name>
</gene>
<dbReference type="EMBL" id="CP000090">
    <property type="protein sequence ID" value="AAZ62093.1"/>
    <property type="molecule type" value="Genomic_DNA"/>
</dbReference>
<dbReference type="SMR" id="Q46XP0"/>
<dbReference type="STRING" id="264198.Reut_A2732"/>
<dbReference type="KEGG" id="reu:Reut_A2732"/>
<dbReference type="eggNOG" id="COG2003">
    <property type="taxonomic scope" value="Bacteria"/>
</dbReference>
<dbReference type="HOGENOM" id="CLU_073529_0_0_4"/>
<dbReference type="OrthoDB" id="9804482at2"/>
<dbReference type="GO" id="GO:0046872">
    <property type="term" value="F:metal ion binding"/>
    <property type="evidence" value="ECO:0007669"/>
    <property type="project" value="UniProtKB-KW"/>
</dbReference>
<dbReference type="GO" id="GO:0008237">
    <property type="term" value="F:metallopeptidase activity"/>
    <property type="evidence" value="ECO:0007669"/>
    <property type="project" value="UniProtKB-KW"/>
</dbReference>
<dbReference type="GO" id="GO:0006508">
    <property type="term" value="P:proteolysis"/>
    <property type="evidence" value="ECO:0007669"/>
    <property type="project" value="UniProtKB-KW"/>
</dbReference>
<dbReference type="CDD" id="cd08071">
    <property type="entry name" value="MPN_DUF2466"/>
    <property type="match status" value="1"/>
</dbReference>
<dbReference type="Gene3D" id="3.40.140.10">
    <property type="entry name" value="Cytidine Deaminase, domain 2"/>
    <property type="match status" value="1"/>
</dbReference>
<dbReference type="InterPro" id="IPR037518">
    <property type="entry name" value="MPN"/>
</dbReference>
<dbReference type="InterPro" id="IPR025657">
    <property type="entry name" value="RadC_JAB"/>
</dbReference>
<dbReference type="InterPro" id="IPR010994">
    <property type="entry name" value="RuvA_2-like"/>
</dbReference>
<dbReference type="InterPro" id="IPR001405">
    <property type="entry name" value="UPF0758"/>
</dbReference>
<dbReference type="InterPro" id="IPR020891">
    <property type="entry name" value="UPF0758_CS"/>
</dbReference>
<dbReference type="InterPro" id="IPR046778">
    <property type="entry name" value="UPF0758_N"/>
</dbReference>
<dbReference type="NCBIfam" id="NF000642">
    <property type="entry name" value="PRK00024.1"/>
    <property type="match status" value="1"/>
</dbReference>
<dbReference type="NCBIfam" id="TIGR00608">
    <property type="entry name" value="radc"/>
    <property type="match status" value="1"/>
</dbReference>
<dbReference type="PANTHER" id="PTHR30471">
    <property type="entry name" value="DNA REPAIR PROTEIN RADC"/>
    <property type="match status" value="1"/>
</dbReference>
<dbReference type="PANTHER" id="PTHR30471:SF3">
    <property type="entry name" value="UPF0758 PROTEIN YEES-RELATED"/>
    <property type="match status" value="1"/>
</dbReference>
<dbReference type="Pfam" id="PF04002">
    <property type="entry name" value="RadC"/>
    <property type="match status" value="1"/>
</dbReference>
<dbReference type="Pfam" id="PF20582">
    <property type="entry name" value="UPF0758_N"/>
    <property type="match status" value="1"/>
</dbReference>
<dbReference type="SUPFAM" id="SSF102712">
    <property type="entry name" value="JAB1/MPN domain"/>
    <property type="match status" value="1"/>
</dbReference>
<dbReference type="SUPFAM" id="SSF47781">
    <property type="entry name" value="RuvA domain 2-like"/>
    <property type="match status" value="1"/>
</dbReference>
<dbReference type="PROSITE" id="PS50249">
    <property type="entry name" value="MPN"/>
    <property type="match status" value="1"/>
</dbReference>
<dbReference type="PROSITE" id="PS01302">
    <property type="entry name" value="UPF0758"/>
    <property type="match status" value="1"/>
</dbReference>
<organism>
    <name type="scientific">Cupriavidus pinatubonensis (strain JMP 134 / LMG 1197)</name>
    <name type="common">Cupriavidus necator (strain JMP 134)</name>
    <dbReference type="NCBI Taxonomy" id="264198"/>
    <lineage>
        <taxon>Bacteria</taxon>
        <taxon>Pseudomonadati</taxon>
        <taxon>Pseudomonadota</taxon>
        <taxon>Betaproteobacteria</taxon>
        <taxon>Burkholderiales</taxon>
        <taxon>Burkholderiaceae</taxon>
        <taxon>Cupriavidus</taxon>
    </lineage>
</organism>
<protein>
    <recommendedName>
        <fullName>UPF0758 protein Reut_A2732</fullName>
    </recommendedName>
</protein>
<feature type="chain" id="PRO_1000001686" description="UPF0758 protein Reut_A2732">
    <location>
        <begin position="1"/>
        <end position="228"/>
    </location>
</feature>
<feature type="domain" description="MPN" evidence="1">
    <location>
        <begin position="102"/>
        <end position="224"/>
    </location>
</feature>
<feature type="short sequence motif" description="JAMM motif" evidence="1">
    <location>
        <begin position="173"/>
        <end position="186"/>
    </location>
</feature>
<feature type="binding site" evidence="1">
    <location>
        <position position="173"/>
    </location>
    <ligand>
        <name>Zn(2+)</name>
        <dbReference type="ChEBI" id="CHEBI:29105"/>
        <note>catalytic</note>
    </ligand>
</feature>
<feature type="binding site" evidence="1">
    <location>
        <position position="175"/>
    </location>
    <ligand>
        <name>Zn(2+)</name>
        <dbReference type="ChEBI" id="CHEBI:29105"/>
        <note>catalytic</note>
    </ligand>
</feature>
<feature type="binding site" evidence="1">
    <location>
        <position position="186"/>
    </location>
    <ligand>
        <name>Zn(2+)</name>
        <dbReference type="ChEBI" id="CHEBI:29105"/>
        <note>catalytic</note>
    </ligand>
</feature>
<evidence type="ECO:0000255" key="1">
    <source>
        <dbReference type="PROSITE-ProRule" id="PRU01182"/>
    </source>
</evidence>
<evidence type="ECO:0000305" key="2"/>
<comment type="similarity">
    <text evidence="2">Belongs to the UPF0758 family.</text>
</comment>